<proteinExistence type="inferred from homology"/>
<protein>
    <recommendedName>
        <fullName evidence="1">Endoribonuclease YbeY</fullName>
        <ecNumber evidence="1">3.1.-.-</ecNumber>
    </recommendedName>
</protein>
<dbReference type="EC" id="3.1.-.-" evidence="1"/>
<dbReference type="EMBL" id="CR626927">
    <property type="protein sequence ID" value="CAH05896.1"/>
    <property type="molecule type" value="Genomic_DNA"/>
</dbReference>
<dbReference type="RefSeq" id="WP_005783716.1">
    <property type="nucleotide sequence ID" value="NZ_UFTH01000001.1"/>
</dbReference>
<dbReference type="SMR" id="Q5LIY0"/>
<dbReference type="PaxDb" id="272559-BF9343_0117"/>
<dbReference type="GeneID" id="60368216"/>
<dbReference type="KEGG" id="bfs:BF9343_0117"/>
<dbReference type="eggNOG" id="COG0319">
    <property type="taxonomic scope" value="Bacteria"/>
</dbReference>
<dbReference type="HOGENOM" id="CLU_106710_3_3_10"/>
<dbReference type="Proteomes" id="UP000006731">
    <property type="component" value="Chromosome"/>
</dbReference>
<dbReference type="GO" id="GO:0005737">
    <property type="term" value="C:cytoplasm"/>
    <property type="evidence" value="ECO:0007669"/>
    <property type="project" value="UniProtKB-SubCell"/>
</dbReference>
<dbReference type="GO" id="GO:0004222">
    <property type="term" value="F:metalloendopeptidase activity"/>
    <property type="evidence" value="ECO:0007669"/>
    <property type="project" value="InterPro"/>
</dbReference>
<dbReference type="GO" id="GO:0004521">
    <property type="term" value="F:RNA endonuclease activity"/>
    <property type="evidence" value="ECO:0007669"/>
    <property type="project" value="UniProtKB-UniRule"/>
</dbReference>
<dbReference type="GO" id="GO:0008270">
    <property type="term" value="F:zinc ion binding"/>
    <property type="evidence" value="ECO:0007669"/>
    <property type="project" value="UniProtKB-UniRule"/>
</dbReference>
<dbReference type="GO" id="GO:0006364">
    <property type="term" value="P:rRNA processing"/>
    <property type="evidence" value="ECO:0007669"/>
    <property type="project" value="UniProtKB-UniRule"/>
</dbReference>
<dbReference type="Gene3D" id="3.40.390.30">
    <property type="entry name" value="Metalloproteases ('zincins'), catalytic domain"/>
    <property type="match status" value="1"/>
</dbReference>
<dbReference type="HAMAP" id="MF_00009">
    <property type="entry name" value="Endoribonucl_YbeY"/>
    <property type="match status" value="1"/>
</dbReference>
<dbReference type="InterPro" id="IPR023091">
    <property type="entry name" value="MetalPrtase_cat_dom_sf_prd"/>
</dbReference>
<dbReference type="InterPro" id="IPR002036">
    <property type="entry name" value="YbeY"/>
</dbReference>
<dbReference type="NCBIfam" id="TIGR00043">
    <property type="entry name" value="rRNA maturation RNase YbeY"/>
    <property type="match status" value="1"/>
</dbReference>
<dbReference type="PANTHER" id="PTHR46986">
    <property type="entry name" value="ENDORIBONUCLEASE YBEY, CHLOROPLASTIC"/>
    <property type="match status" value="1"/>
</dbReference>
<dbReference type="PANTHER" id="PTHR46986:SF1">
    <property type="entry name" value="ENDORIBONUCLEASE YBEY, CHLOROPLASTIC"/>
    <property type="match status" value="1"/>
</dbReference>
<dbReference type="Pfam" id="PF02130">
    <property type="entry name" value="YbeY"/>
    <property type="match status" value="1"/>
</dbReference>
<dbReference type="SUPFAM" id="SSF55486">
    <property type="entry name" value="Metalloproteases ('zincins'), catalytic domain"/>
    <property type="match status" value="1"/>
</dbReference>
<name>YBEY_BACFN</name>
<organism>
    <name type="scientific">Bacteroides fragilis (strain ATCC 25285 / DSM 2151 / CCUG 4856 / JCM 11019 / LMG 10263 / NCTC 9343 / Onslow / VPI 2553 / EN-2)</name>
    <dbReference type="NCBI Taxonomy" id="272559"/>
    <lineage>
        <taxon>Bacteria</taxon>
        <taxon>Pseudomonadati</taxon>
        <taxon>Bacteroidota</taxon>
        <taxon>Bacteroidia</taxon>
        <taxon>Bacteroidales</taxon>
        <taxon>Bacteroidaceae</taxon>
        <taxon>Bacteroides</taxon>
    </lineage>
</organism>
<feature type="chain" id="PRO_0000284162" description="Endoribonuclease YbeY">
    <location>
        <begin position="1"/>
        <end position="139"/>
    </location>
</feature>
<feature type="binding site" evidence="1">
    <location>
        <position position="107"/>
    </location>
    <ligand>
        <name>Zn(2+)</name>
        <dbReference type="ChEBI" id="CHEBI:29105"/>
        <note>catalytic</note>
    </ligand>
</feature>
<feature type="binding site" evidence="1">
    <location>
        <position position="111"/>
    </location>
    <ligand>
        <name>Zn(2+)</name>
        <dbReference type="ChEBI" id="CHEBI:29105"/>
        <note>catalytic</note>
    </ligand>
</feature>
<feature type="binding site" evidence="1">
    <location>
        <position position="117"/>
    </location>
    <ligand>
        <name>Zn(2+)</name>
        <dbReference type="ChEBI" id="CHEBI:29105"/>
        <note>catalytic</note>
    </ligand>
</feature>
<keyword id="KW-0963">Cytoplasm</keyword>
<keyword id="KW-0255">Endonuclease</keyword>
<keyword id="KW-0378">Hydrolase</keyword>
<keyword id="KW-0479">Metal-binding</keyword>
<keyword id="KW-0540">Nuclease</keyword>
<keyword id="KW-0690">Ribosome biogenesis</keyword>
<keyword id="KW-0698">rRNA processing</keyword>
<keyword id="KW-0862">Zinc</keyword>
<sequence>MAITYQTEGIKMPDIKKRETTEWIKAVAATYEKRIGEIAYIFCSDEKILEVNRQYLQHDYYTDIITFDYCEGNRLSGDLFISLETVKTNSEQFNTPYEEELHRTIIHGILHLCGINDKGPGEREIMEAAENKALAMRKQ</sequence>
<reference key="1">
    <citation type="journal article" date="2005" name="Science">
        <title>Extensive DNA inversions in the B. fragilis genome control variable gene expression.</title>
        <authorList>
            <person name="Cerdeno-Tarraga A.-M."/>
            <person name="Patrick S."/>
            <person name="Crossman L.C."/>
            <person name="Blakely G."/>
            <person name="Abratt V."/>
            <person name="Lennard N."/>
            <person name="Poxton I."/>
            <person name="Duerden B."/>
            <person name="Harris B."/>
            <person name="Quail M.A."/>
            <person name="Barron A."/>
            <person name="Clark L."/>
            <person name="Corton C."/>
            <person name="Doggett J."/>
            <person name="Holden M.T.G."/>
            <person name="Larke N."/>
            <person name="Line A."/>
            <person name="Lord A."/>
            <person name="Norbertczak H."/>
            <person name="Ormond D."/>
            <person name="Price C."/>
            <person name="Rabbinowitsch E."/>
            <person name="Woodward J."/>
            <person name="Barrell B.G."/>
            <person name="Parkhill J."/>
        </authorList>
    </citation>
    <scope>NUCLEOTIDE SEQUENCE [LARGE SCALE GENOMIC DNA]</scope>
    <source>
        <strain>ATCC 25285 / DSM 2151 / CCUG 4856 / JCM 11019 / LMG 10263 / NCTC 9343 / Onslow / VPI 2553 / EN-2</strain>
    </source>
</reference>
<evidence type="ECO:0000255" key="1">
    <source>
        <dbReference type="HAMAP-Rule" id="MF_00009"/>
    </source>
</evidence>
<accession>Q5LIY0</accession>
<gene>
    <name evidence="1" type="primary">ybeY</name>
    <name type="ordered locus">BF0118</name>
</gene>
<comment type="function">
    <text evidence="1">Single strand-specific metallo-endoribonuclease involved in late-stage 70S ribosome quality control and in maturation of the 3' terminus of the 16S rRNA.</text>
</comment>
<comment type="cofactor">
    <cofactor evidence="1">
        <name>Zn(2+)</name>
        <dbReference type="ChEBI" id="CHEBI:29105"/>
    </cofactor>
    <text evidence="1">Binds 1 zinc ion.</text>
</comment>
<comment type="subcellular location">
    <subcellularLocation>
        <location evidence="1">Cytoplasm</location>
    </subcellularLocation>
</comment>
<comment type="similarity">
    <text evidence="1">Belongs to the endoribonuclease YbeY family.</text>
</comment>